<protein>
    <recommendedName>
        <fullName>Putative mRNA-capping enzyme P5</fullName>
    </recommendedName>
    <alternativeName>
        <fullName>Structural protein 5</fullName>
    </alternativeName>
    <alternativeName>
        <fullName>mRNA guanylyltransferase P5</fullName>
        <ecNumber>2.7.7.50</ecNumber>
    </alternativeName>
</protein>
<name>MCE_WTV</name>
<comment type="function">
    <text evidence="1 2">Enzyme involved in mRNA capping (Potential). Binds to GTP and might have guanylyltransferase activity. Together with the RNA-directed RNA polymerase P1 and protein P7, forms an transcriptional complex positioned near the channels situated at each of the five-fold vertices of the core (By similarity).</text>
</comment>
<comment type="catalytic activity">
    <reaction>
        <text>a 5'-end diphospho-ribonucleoside in mRNA + GTP + H(+) = a 5'-end (5'-triphosphoguanosine)-ribonucleoside in mRNA + diphosphate</text>
        <dbReference type="Rhea" id="RHEA:67012"/>
        <dbReference type="Rhea" id="RHEA-COMP:17165"/>
        <dbReference type="Rhea" id="RHEA-COMP:17166"/>
        <dbReference type="ChEBI" id="CHEBI:15378"/>
        <dbReference type="ChEBI" id="CHEBI:33019"/>
        <dbReference type="ChEBI" id="CHEBI:37565"/>
        <dbReference type="ChEBI" id="CHEBI:167616"/>
        <dbReference type="ChEBI" id="CHEBI:167617"/>
        <dbReference type="EC" id="2.7.7.50"/>
    </reaction>
</comment>
<comment type="pathway">
    <text>mRNA processing; mRNA capping.</text>
</comment>
<comment type="subcellular location">
    <subcellularLocation>
        <location evidence="1">Virion</location>
    </subcellularLocation>
    <subcellularLocation>
        <location evidence="1">Host cytoplasm</location>
    </subcellularLocation>
    <text evidence="1">Located inside the inner capsid. Found in the interior of spherical cytoplasmic structures, called virus factories, that appear early after infection and are the site of viral replication and packaging.</text>
</comment>
<comment type="similarity">
    <text evidence="2">Belongs to the phytoreovirus protein P5 family.</text>
</comment>
<sequence length="804" mass="91063">MAIDSYCIPNFSQTIDNRTIVNIFQSCKYRSQLSVCFLNDKSAADKFSNSMRQGSGTITFIIHAEDGEISEQLHSTFRSVSTMLLCGMQLFVFIVAPRNVISSETGKAITWAFRGSFIELRDHGRGEQALHDILEQFYRLSPLVNVPKMGMAYYGPTSFAELLSLSSKNKTSWRYVIDYSMFTRSALVGFASHMMDECSFANKQINVIGYNPPYVWAGLRHGVTTRFTEMSTPDPEGYGPIKLILPRLTGNVLLKKVKYVQHDPQKKLLCDDSVMFALSRNILYIGVYPATHLLDYNLKGWRMVAVDPKINAAWAETLKQRTSIDLVPISAKFEFNAQSTRDIVLKYFSGVPFSIIDDSWVEGTEDYEKFQELKQSYFEQLVMNGSTSKLRVSMISMKWNRTKDVKCRRLLALLPQPYGGSLRELRAYFHVNGAAEVNIKKSEVNSYMDKFTSLSISEQIGSQKFMHMLITNYGDALKLKTGRDKAIIASYSLSNAINKKERVLKFLSDAAKSETLIIFGAPNLNRVKFMIKSGIVLGSDVTISNDLITFKNASGKVWKDYGYTQSELIKSSMIEITIEQMLCISSSSYNGVGYFANSIYNDMFSWYVPEWLFEKYFSIQDIRLSPVALVKCFTTSIRNLCYVPHLTYYALRGSFVEKVLITNNVLNSSYLITGTSHSTFKVLSNFEVPSPAGVLKFKAGDDVNISGHLLSLVIAAHFVASPTLLWATHMKRMTTPVNLPKNLDKLLFFDNKIKNGMLEKWHSREEVVLAAMIVENYVAHILNGRHSIEIIQEITQVIYEKFNA</sequence>
<dbReference type="EC" id="2.7.7.50"/>
<dbReference type="EMBL" id="J03020">
    <property type="protein sequence ID" value="AAA48499.1"/>
    <property type="molecule type" value="Genomic_RNA"/>
</dbReference>
<dbReference type="PIR" id="A39972">
    <property type="entry name" value="A39972"/>
</dbReference>
<dbReference type="RefSeq" id="YP_009508276.1">
    <property type="nucleotide sequence ID" value="NC_038948.1"/>
</dbReference>
<dbReference type="SMR" id="P12366"/>
<dbReference type="GeneID" id="37619684"/>
<dbReference type="OrthoDB" id="2819at10239"/>
<dbReference type="UniPathway" id="UPA00922"/>
<dbReference type="Proteomes" id="UP000242823">
    <property type="component" value="Genome"/>
</dbReference>
<dbReference type="GO" id="GO:0030430">
    <property type="term" value="C:host cell cytoplasm"/>
    <property type="evidence" value="ECO:0007669"/>
    <property type="project" value="UniProtKB-SubCell"/>
</dbReference>
<dbReference type="GO" id="GO:0044423">
    <property type="term" value="C:virion component"/>
    <property type="evidence" value="ECO:0007669"/>
    <property type="project" value="UniProtKB-KW"/>
</dbReference>
<dbReference type="GO" id="GO:0005525">
    <property type="term" value="F:GTP binding"/>
    <property type="evidence" value="ECO:0007669"/>
    <property type="project" value="UniProtKB-KW"/>
</dbReference>
<dbReference type="GO" id="GO:0004484">
    <property type="term" value="F:mRNA guanylyltransferase activity"/>
    <property type="evidence" value="ECO:0007669"/>
    <property type="project" value="UniProtKB-EC"/>
</dbReference>
<dbReference type="GO" id="GO:0003723">
    <property type="term" value="F:RNA binding"/>
    <property type="evidence" value="ECO:0007669"/>
    <property type="project" value="UniProtKB-KW"/>
</dbReference>
<dbReference type="GO" id="GO:0006370">
    <property type="term" value="P:7-methylguanosine mRNA capping"/>
    <property type="evidence" value="ECO:0007669"/>
    <property type="project" value="UniProtKB-UniPathway"/>
</dbReference>
<dbReference type="CDD" id="cd20759">
    <property type="entry name" value="capping_2-OMTase_Phytoreovirus"/>
    <property type="match status" value="1"/>
</dbReference>
<dbReference type="InterPro" id="IPR044310">
    <property type="entry name" value="P5_Phytoreov"/>
</dbReference>
<accession>P12366</accession>
<proteinExistence type="inferred from homology"/>
<keyword id="KW-0342">GTP-binding</keyword>
<keyword id="KW-1035">Host cytoplasm</keyword>
<keyword id="KW-0506">mRNA capping</keyword>
<keyword id="KW-0507">mRNA processing</keyword>
<keyword id="KW-0547">Nucleotide-binding</keyword>
<keyword id="KW-0548">Nucleotidyltransferase</keyword>
<keyword id="KW-0694">RNA-binding</keyword>
<keyword id="KW-0808">Transferase</keyword>
<keyword id="KW-0946">Virion</keyword>
<feature type="chain" id="PRO_0000222763" description="Putative mRNA-capping enzyme P5">
    <location>
        <begin position="1"/>
        <end position="804"/>
    </location>
</feature>
<evidence type="ECO:0000250" key="1"/>
<evidence type="ECO:0000305" key="2"/>
<reference key="1">
    <citation type="journal article" date="1987" name="Proc. Natl. Acad. Sci. U.S.A.">
        <title>Segment-specific inverted repeats found adjacent to conserved terminal sequences in wound tumor virus genome and defective interfering RNAs.</title>
        <authorList>
            <person name="Anzola J.V."/>
            <person name="Xu Z."/>
            <person name="Asamizu T."/>
            <person name="Nuss D.L."/>
        </authorList>
    </citation>
    <scope>NUCLEOTIDE SEQUENCE [GENOMIC RNA]</scope>
</reference>
<organismHost>
    <name type="scientific">Catharanthus roseus</name>
    <name type="common">Madagascar periwinkle</name>
    <name type="synonym">Vinca rosea</name>
    <dbReference type="NCBI Taxonomy" id="4058"/>
</organismHost>
<organismHost>
    <name type="scientific">Melilotus officinalis</name>
    <name type="common">Yellow sweet clover</name>
    <name type="synonym">Trifolium officinale</name>
    <dbReference type="NCBI Taxonomy" id="47083"/>
</organismHost>
<organismHost>
    <name type="scientific">Trifolium incarnatum</name>
    <name type="common">Crimson clover</name>
    <dbReference type="NCBI Taxonomy" id="60916"/>
</organismHost>
<organism>
    <name type="scientific">Wound tumor virus</name>
    <name type="common">WTV</name>
    <dbReference type="NCBI Taxonomy" id="10987"/>
    <lineage>
        <taxon>Viruses</taxon>
        <taxon>Riboviria</taxon>
        <taxon>Orthornavirae</taxon>
        <taxon>Duplornaviricota</taxon>
        <taxon>Resentoviricetes</taxon>
        <taxon>Reovirales</taxon>
        <taxon>Sedoreoviridae</taxon>
        <taxon>Phytoreovirus</taxon>
    </lineage>
</organism>